<accession>A4T2J4</accession>
<protein>
    <recommendedName>
        <fullName evidence="1">GTPase Obg</fullName>
        <ecNumber evidence="1">3.6.5.-</ecNumber>
    </recommendedName>
    <alternativeName>
        <fullName evidence="1">GTP-binding protein Obg</fullName>
    </alternativeName>
</protein>
<comment type="function">
    <text evidence="1">An essential GTPase which binds GTP, GDP and possibly (p)ppGpp with moderate affinity, with high nucleotide exchange rates and a fairly low GTP hydrolysis rate. Plays a role in control of the cell cycle, stress response, ribosome biogenesis and in those bacteria that undergo differentiation, in morphogenesis control.</text>
</comment>
<comment type="cofactor">
    <cofactor evidence="1">
        <name>Mg(2+)</name>
        <dbReference type="ChEBI" id="CHEBI:18420"/>
    </cofactor>
</comment>
<comment type="subunit">
    <text evidence="1">Monomer.</text>
</comment>
<comment type="subcellular location">
    <subcellularLocation>
        <location evidence="1">Cytoplasm</location>
    </subcellularLocation>
</comment>
<comment type="similarity">
    <text evidence="1">Belongs to the TRAFAC class OBG-HflX-like GTPase superfamily. OBG GTPase family.</text>
</comment>
<gene>
    <name evidence="1" type="primary">obg</name>
    <name type="ordered locus">Mflv_2637</name>
</gene>
<reference key="1">
    <citation type="submission" date="2007-04" db="EMBL/GenBank/DDBJ databases">
        <title>Complete sequence of chromosome of Mycobacterium gilvum PYR-GCK.</title>
        <authorList>
            <consortium name="US DOE Joint Genome Institute"/>
            <person name="Copeland A."/>
            <person name="Lucas S."/>
            <person name="Lapidus A."/>
            <person name="Barry K."/>
            <person name="Detter J.C."/>
            <person name="Glavina del Rio T."/>
            <person name="Hammon N."/>
            <person name="Israni S."/>
            <person name="Dalin E."/>
            <person name="Tice H."/>
            <person name="Pitluck S."/>
            <person name="Chain P."/>
            <person name="Malfatti S."/>
            <person name="Shin M."/>
            <person name="Vergez L."/>
            <person name="Schmutz J."/>
            <person name="Larimer F."/>
            <person name="Land M."/>
            <person name="Hauser L."/>
            <person name="Kyrpides N."/>
            <person name="Mikhailova N."/>
            <person name="Miller C."/>
            <person name="Richardson P."/>
        </authorList>
    </citation>
    <scope>NUCLEOTIDE SEQUENCE [LARGE SCALE GENOMIC DNA]</scope>
    <source>
        <strain>PYR-GCK</strain>
    </source>
</reference>
<sequence length="482" mass="50913">MPRFIDRVVVHARAGNGGNGCASVHREKFKPLGGPDGGNGGRGGSVVFVVDPQVHTLLDFHFHPHVVAPSGKQGAGSNRDGAAGADLEVKVPDGTVVLDERGQILADLIGAGTRFEAAAGGRGGLGNAALASRARKAPGFALLGEQGEVRELTLELKTVADVGLVGFPSAGKSSLVSTISAAKPKIADYPFTTLAPNLGVVSAGEHTFTVADVPGLIPGASEGRGLGLDFLRHIERCAVLVHVVDCATLEPGRDPISDIEALEAEIAAYTPTLQGDSTLGDLAERPRAVVLNKIDVPEARELADFVREDVETRFGWPVFEISTVAREGLRPLIFALWDMVAAYRAAQPAAVPRRPVIRPIPVDETAFSVVPDGQGGFVVKGTRPQRWVAQTNFDNDEAVGYLGDRLARLGVEDELLKLGARPGCAVTIGDMTFDWEPQTPAGVDVHLSGRGTDVRLEQTDRVGADERKAARKARRQSDDGEE</sequence>
<organism>
    <name type="scientific">Mycolicibacterium gilvum (strain PYR-GCK)</name>
    <name type="common">Mycobacterium gilvum (strain PYR-GCK)</name>
    <dbReference type="NCBI Taxonomy" id="350054"/>
    <lineage>
        <taxon>Bacteria</taxon>
        <taxon>Bacillati</taxon>
        <taxon>Actinomycetota</taxon>
        <taxon>Actinomycetes</taxon>
        <taxon>Mycobacteriales</taxon>
        <taxon>Mycobacteriaceae</taxon>
        <taxon>Mycolicibacterium</taxon>
    </lineage>
</organism>
<keyword id="KW-0963">Cytoplasm</keyword>
<keyword id="KW-0342">GTP-binding</keyword>
<keyword id="KW-0378">Hydrolase</keyword>
<keyword id="KW-0460">Magnesium</keyword>
<keyword id="KW-0479">Metal-binding</keyword>
<keyword id="KW-0547">Nucleotide-binding</keyword>
<name>OBG_MYCGI</name>
<feature type="chain" id="PRO_0000386053" description="GTPase Obg">
    <location>
        <begin position="1"/>
        <end position="482"/>
    </location>
</feature>
<feature type="domain" description="Obg" evidence="3">
    <location>
        <begin position="2"/>
        <end position="159"/>
    </location>
</feature>
<feature type="domain" description="OBG-type G" evidence="1">
    <location>
        <begin position="160"/>
        <end position="341"/>
    </location>
</feature>
<feature type="domain" description="OCT" evidence="2">
    <location>
        <begin position="359"/>
        <end position="437"/>
    </location>
</feature>
<feature type="region of interest" description="Disordered" evidence="4">
    <location>
        <begin position="450"/>
        <end position="482"/>
    </location>
</feature>
<feature type="compositionally biased region" description="Basic and acidic residues" evidence="4">
    <location>
        <begin position="452"/>
        <end position="468"/>
    </location>
</feature>
<feature type="binding site" evidence="1">
    <location>
        <begin position="166"/>
        <end position="173"/>
    </location>
    <ligand>
        <name>GTP</name>
        <dbReference type="ChEBI" id="CHEBI:37565"/>
    </ligand>
</feature>
<feature type="binding site" evidence="1">
    <location>
        <position position="173"/>
    </location>
    <ligand>
        <name>Mg(2+)</name>
        <dbReference type="ChEBI" id="CHEBI:18420"/>
    </ligand>
</feature>
<feature type="binding site" evidence="1">
    <location>
        <begin position="191"/>
        <end position="195"/>
    </location>
    <ligand>
        <name>GTP</name>
        <dbReference type="ChEBI" id="CHEBI:37565"/>
    </ligand>
</feature>
<feature type="binding site" evidence="1">
    <location>
        <position position="193"/>
    </location>
    <ligand>
        <name>Mg(2+)</name>
        <dbReference type="ChEBI" id="CHEBI:18420"/>
    </ligand>
</feature>
<feature type="binding site" evidence="1">
    <location>
        <begin position="212"/>
        <end position="215"/>
    </location>
    <ligand>
        <name>GTP</name>
        <dbReference type="ChEBI" id="CHEBI:37565"/>
    </ligand>
</feature>
<feature type="binding site" evidence="1">
    <location>
        <begin position="292"/>
        <end position="295"/>
    </location>
    <ligand>
        <name>GTP</name>
        <dbReference type="ChEBI" id="CHEBI:37565"/>
    </ligand>
</feature>
<feature type="binding site" evidence="1">
    <location>
        <begin position="322"/>
        <end position="324"/>
    </location>
    <ligand>
        <name>GTP</name>
        <dbReference type="ChEBI" id="CHEBI:37565"/>
    </ligand>
</feature>
<evidence type="ECO:0000255" key="1">
    <source>
        <dbReference type="HAMAP-Rule" id="MF_01454"/>
    </source>
</evidence>
<evidence type="ECO:0000255" key="2">
    <source>
        <dbReference type="PROSITE-ProRule" id="PRU01229"/>
    </source>
</evidence>
<evidence type="ECO:0000255" key="3">
    <source>
        <dbReference type="PROSITE-ProRule" id="PRU01231"/>
    </source>
</evidence>
<evidence type="ECO:0000256" key="4">
    <source>
        <dbReference type="SAM" id="MobiDB-lite"/>
    </source>
</evidence>
<dbReference type="EC" id="3.6.5.-" evidence="1"/>
<dbReference type="EMBL" id="CP000656">
    <property type="protein sequence ID" value="ABP45114.1"/>
    <property type="molecule type" value="Genomic_DNA"/>
</dbReference>
<dbReference type="SMR" id="A4T2J4"/>
<dbReference type="STRING" id="350054.Mflv_2637"/>
<dbReference type="KEGG" id="mgi:Mflv_2637"/>
<dbReference type="eggNOG" id="COG0536">
    <property type="taxonomic scope" value="Bacteria"/>
</dbReference>
<dbReference type="HOGENOM" id="CLU_011747_0_1_11"/>
<dbReference type="OrthoDB" id="9807318at2"/>
<dbReference type="GO" id="GO:0005737">
    <property type="term" value="C:cytoplasm"/>
    <property type="evidence" value="ECO:0007669"/>
    <property type="project" value="UniProtKB-SubCell"/>
</dbReference>
<dbReference type="GO" id="GO:0005525">
    <property type="term" value="F:GTP binding"/>
    <property type="evidence" value="ECO:0007669"/>
    <property type="project" value="UniProtKB-UniRule"/>
</dbReference>
<dbReference type="GO" id="GO:0003924">
    <property type="term" value="F:GTPase activity"/>
    <property type="evidence" value="ECO:0007669"/>
    <property type="project" value="UniProtKB-UniRule"/>
</dbReference>
<dbReference type="GO" id="GO:0000287">
    <property type="term" value="F:magnesium ion binding"/>
    <property type="evidence" value="ECO:0007669"/>
    <property type="project" value="InterPro"/>
</dbReference>
<dbReference type="GO" id="GO:0042254">
    <property type="term" value="P:ribosome biogenesis"/>
    <property type="evidence" value="ECO:0007669"/>
    <property type="project" value="UniProtKB-UniRule"/>
</dbReference>
<dbReference type="CDD" id="cd01898">
    <property type="entry name" value="Obg"/>
    <property type="match status" value="1"/>
</dbReference>
<dbReference type="FunFam" id="2.70.210.12:FF:000001">
    <property type="entry name" value="GTPase Obg"/>
    <property type="match status" value="1"/>
</dbReference>
<dbReference type="Gene3D" id="3.30.300.350">
    <property type="entry name" value="GTP-binding protein OBG, C-terminal domain"/>
    <property type="match status" value="1"/>
</dbReference>
<dbReference type="Gene3D" id="2.70.210.12">
    <property type="entry name" value="GTP1/OBG domain"/>
    <property type="match status" value="1"/>
</dbReference>
<dbReference type="Gene3D" id="3.40.50.300">
    <property type="entry name" value="P-loop containing nucleotide triphosphate hydrolases"/>
    <property type="match status" value="1"/>
</dbReference>
<dbReference type="HAMAP" id="MF_01454">
    <property type="entry name" value="GTPase_Obg"/>
    <property type="match status" value="1"/>
</dbReference>
<dbReference type="InterPro" id="IPR031167">
    <property type="entry name" value="G_OBG"/>
</dbReference>
<dbReference type="InterPro" id="IPR006073">
    <property type="entry name" value="GTP-bd"/>
</dbReference>
<dbReference type="InterPro" id="IPR014100">
    <property type="entry name" value="GTP-bd_Obg/CgtA"/>
</dbReference>
<dbReference type="InterPro" id="IPR036346">
    <property type="entry name" value="GTP-bd_prot_GTP1/OBG_C_sf"/>
</dbReference>
<dbReference type="InterPro" id="IPR006074">
    <property type="entry name" value="GTP1-OBG_CS"/>
</dbReference>
<dbReference type="InterPro" id="IPR006169">
    <property type="entry name" value="GTP1_OBG_dom"/>
</dbReference>
<dbReference type="InterPro" id="IPR036726">
    <property type="entry name" value="GTP1_OBG_dom_sf"/>
</dbReference>
<dbReference type="InterPro" id="IPR045086">
    <property type="entry name" value="OBG_GTPase"/>
</dbReference>
<dbReference type="InterPro" id="IPR015349">
    <property type="entry name" value="OCT_dom"/>
</dbReference>
<dbReference type="InterPro" id="IPR027417">
    <property type="entry name" value="P-loop_NTPase"/>
</dbReference>
<dbReference type="NCBIfam" id="TIGR02729">
    <property type="entry name" value="Obg_CgtA"/>
    <property type="match status" value="1"/>
</dbReference>
<dbReference type="NCBIfam" id="TIGR03595">
    <property type="entry name" value="Obg_CgtA_exten"/>
    <property type="match status" value="1"/>
</dbReference>
<dbReference type="NCBIfam" id="NF008954">
    <property type="entry name" value="PRK12296.1"/>
    <property type="match status" value="1"/>
</dbReference>
<dbReference type="NCBIfam" id="NF008955">
    <property type="entry name" value="PRK12297.1"/>
    <property type="match status" value="1"/>
</dbReference>
<dbReference type="NCBIfam" id="NF008956">
    <property type="entry name" value="PRK12299.1"/>
    <property type="match status" value="1"/>
</dbReference>
<dbReference type="PANTHER" id="PTHR11702">
    <property type="entry name" value="DEVELOPMENTALLY REGULATED GTP-BINDING PROTEIN-RELATED"/>
    <property type="match status" value="1"/>
</dbReference>
<dbReference type="PANTHER" id="PTHR11702:SF31">
    <property type="entry name" value="MITOCHONDRIAL RIBOSOME-ASSOCIATED GTPASE 2"/>
    <property type="match status" value="1"/>
</dbReference>
<dbReference type="Pfam" id="PF09269">
    <property type="entry name" value="DUF1967"/>
    <property type="match status" value="1"/>
</dbReference>
<dbReference type="Pfam" id="PF01018">
    <property type="entry name" value="GTP1_OBG"/>
    <property type="match status" value="1"/>
</dbReference>
<dbReference type="Pfam" id="PF01926">
    <property type="entry name" value="MMR_HSR1"/>
    <property type="match status" value="1"/>
</dbReference>
<dbReference type="PRINTS" id="PR00326">
    <property type="entry name" value="GTP1OBG"/>
</dbReference>
<dbReference type="SUPFAM" id="SSF102741">
    <property type="entry name" value="Obg GTP-binding protein C-terminal domain"/>
    <property type="match status" value="1"/>
</dbReference>
<dbReference type="SUPFAM" id="SSF82051">
    <property type="entry name" value="Obg GTP-binding protein N-terminal domain"/>
    <property type="match status" value="1"/>
</dbReference>
<dbReference type="SUPFAM" id="SSF52540">
    <property type="entry name" value="P-loop containing nucleoside triphosphate hydrolases"/>
    <property type="match status" value="1"/>
</dbReference>
<dbReference type="PROSITE" id="PS51710">
    <property type="entry name" value="G_OBG"/>
    <property type="match status" value="1"/>
</dbReference>
<dbReference type="PROSITE" id="PS00905">
    <property type="entry name" value="GTP1_OBG"/>
    <property type="match status" value="1"/>
</dbReference>
<dbReference type="PROSITE" id="PS51883">
    <property type="entry name" value="OBG"/>
    <property type="match status" value="1"/>
</dbReference>
<dbReference type="PROSITE" id="PS51881">
    <property type="entry name" value="OCT"/>
    <property type="match status" value="1"/>
</dbReference>
<proteinExistence type="inferred from homology"/>